<comment type="function">
    <text evidence="1 15">Acts as a co-chaperone for HSP90AA1 (PubMed:27353360). Mediates the association of the molecular chaperones HSPA8/HSC70 and HSP90 (By similarity).</text>
</comment>
<comment type="subunit">
    <text evidence="1 2 6 7 8 9 10 11">Probably forms a complex composed of chaperones HSP90 and HSP70, co-chaperones STIP1/HOP, CDC37, PPP5C, PTGES3/p23, TSC1 and client protein TSC2 (PubMed:29127155). Forms a complex with HSPA8/HSC70, HSPCA/HSP-86 and HSPCB/HSP-84 (By similarity). Interacts with PACRG (PubMed:14532270). Interacts with EEF1AKMT3 (PubMed:23349634). Interacts with HSP90/HSP90AA1; the interaction dissociates the PPP5C:HSP90AA1 interaction (PubMed:27353360, PubMed:9195923). Interacts with FLCN, FNIP1 and FNIP2 (PubMed:27353360). Interacts with HSPA8/HSC70 (By similarity). Interacts with HSP90AB1; upon SMYD2-dependent HSP90AB1 methylation (PubMed:24880080).</text>
</comment>
<comment type="interaction">
    <interactant intactId="EBI-1054052">
        <id>P31948</id>
    </interactant>
    <interactant intactId="EBI-717666">
        <id>Q96AP0</id>
        <label>ACD</label>
    </interactant>
    <organismsDiffer>false</organismsDiffer>
    <experiments>2</experiments>
</comment>
<comment type="interaction">
    <interactant intactId="EBI-1054052">
        <id>P31948</id>
    </interactant>
    <interactant intactId="EBI-18899653">
        <id>Q6DHV7-2</id>
        <label>ADAL</label>
    </interactant>
    <organismsDiffer>false</organismsDiffer>
    <experiments>3</experiments>
</comment>
<comment type="interaction">
    <interactant intactId="EBI-1054052">
        <id>P31948</id>
    </interactant>
    <interactant intactId="EBI-18036948">
        <id>Q3SXR2</id>
        <label>C3orf36</label>
    </interactant>
    <organismsDiffer>false</organismsDiffer>
    <experiments>3</experiments>
</comment>
<comment type="interaction">
    <interactant intactId="EBI-1054052">
        <id>P31948</id>
    </interactant>
    <interactant intactId="EBI-2932457">
        <id>O15484</id>
        <label>CAPN5</label>
    </interactant>
    <organismsDiffer>false</organismsDiffer>
    <experiments>2</experiments>
</comment>
<comment type="interaction">
    <interactant intactId="EBI-1054052">
        <id>P31948</id>
    </interactant>
    <interactant intactId="EBI-3387963">
        <id>Q8IWD4</id>
        <label>CCDC117</label>
    </interactant>
    <organismsDiffer>false</organismsDiffer>
    <experiments>5</experiments>
</comment>
<comment type="interaction">
    <interactant intactId="EBI-1054052">
        <id>P31948</id>
    </interactant>
    <interactant intactId="EBI-2841876">
        <id>Q7L3B6</id>
        <label>CDC37L1</label>
    </interactant>
    <organismsDiffer>false</organismsDiffer>
    <experiments>2</experiments>
</comment>
<comment type="interaction">
    <interactant intactId="EBI-1054052">
        <id>P31948</id>
    </interactant>
    <interactant intactId="EBI-3913685">
        <id>O95674</id>
        <label>CDS2</label>
    </interactant>
    <organismsDiffer>false</organismsDiffer>
    <experiments>3</experiments>
</comment>
<comment type="interaction">
    <interactant intactId="EBI-1054052">
        <id>P31948</id>
    </interactant>
    <interactant intactId="EBI-297353">
        <id>P00533</id>
        <label>EGFR</label>
    </interactant>
    <organismsDiffer>false</organismsDiffer>
    <experiments>3</experiments>
</comment>
<comment type="interaction">
    <interactant intactId="EBI-1054052">
        <id>P31948</id>
    </interactant>
    <interactant intactId="EBI-751327">
        <id>O00423</id>
        <label>EML1</label>
    </interactant>
    <organismsDiffer>false</organismsDiffer>
    <experiments>3</experiments>
</comment>
<comment type="interaction">
    <interactant intactId="EBI-1054052">
        <id>P31948</id>
    </interactant>
    <interactant intactId="EBI-641062">
        <id>P04626</id>
        <label>ERBB2</label>
    </interactant>
    <organismsDiffer>false</organismsDiffer>
    <experiments>2</experiments>
</comment>
<comment type="interaction">
    <interactant intactId="EBI-1054052">
        <id>P31948</id>
    </interactant>
    <interactant intactId="EBI-8468186">
        <id>Q8IZU1</id>
        <label>FAM9A</label>
    </interactant>
    <organismsDiffer>false</organismsDiffer>
    <experiments>3</experiments>
</comment>
<comment type="interaction">
    <interactant intactId="EBI-1054052">
        <id>P31948</id>
    </interactant>
    <interactant intactId="EBI-6425864">
        <id>Q3SYB3</id>
        <label>FOXD4L6</label>
    </interactant>
    <organismsDiffer>false</organismsDiffer>
    <experiments>3</experiments>
</comment>
<comment type="interaction">
    <interactant intactId="EBI-1054052">
        <id>P31948</id>
    </interactant>
    <interactant intactId="EBI-9088619">
        <id>Q06547-3</id>
        <label>GABPB1</label>
    </interactant>
    <organismsDiffer>false</organismsDiffer>
    <experiments>3</experiments>
</comment>
<comment type="interaction">
    <interactant intactId="EBI-1054052">
        <id>P31948</id>
    </interactant>
    <interactant intactId="EBI-352572">
        <id>P08238</id>
        <label>HSP90AB1</label>
    </interactant>
    <organismsDiffer>false</organismsDiffer>
    <experiments>6</experiments>
</comment>
<comment type="interaction">
    <interactant intactId="EBI-1054052">
        <id>P31948</id>
    </interactant>
    <interactant intactId="EBI-447544">
        <id>P01106</id>
        <label>MYC</label>
    </interactant>
    <organismsDiffer>false</organismsDiffer>
    <experiments>3</experiments>
</comment>
<comment type="interaction">
    <interactant intactId="EBI-1054052">
        <id>P31948</id>
    </interactant>
    <interactant intactId="EBI-712752">
        <id>Q14181</id>
        <label>POLA2</label>
    </interactant>
    <organismsDiffer>false</organismsDiffer>
    <experiments>3</experiments>
</comment>
<comment type="interaction">
    <interactant intactId="EBI-1054052">
        <id>P31948</id>
    </interactant>
    <interactant intactId="EBI-716663">
        <id>P53041</id>
        <label>PPP5C</label>
    </interactant>
    <organismsDiffer>false</organismsDiffer>
    <experiments>4</experiments>
</comment>
<comment type="interaction">
    <interactant intactId="EBI-1054052">
        <id>P31948</id>
    </interactant>
    <interactant intactId="EBI-620823">
        <id>Q09028</id>
        <label>RBBP4</label>
    </interactant>
    <organismsDiffer>false</organismsDiffer>
    <experiments>3</experiments>
</comment>
<comment type="interaction">
    <interactant intactId="EBI-1054052">
        <id>P31948</id>
    </interactant>
    <interactant intactId="EBI-354861">
        <id>Q9C004</id>
        <label>SPRY4</label>
    </interactant>
    <organismsDiffer>false</organismsDiffer>
    <experiments>3</experiments>
</comment>
<comment type="interaction">
    <interactant intactId="EBI-1054052">
        <id>P31948</id>
    </interactant>
    <interactant intactId="EBI-711018">
        <id>P54274-2</id>
        <label>TERF1</label>
    </interactant>
    <organismsDiffer>false</organismsDiffer>
    <experiments>3</experiments>
</comment>
<comment type="interaction">
    <interactant intactId="EBI-1054052">
        <id>P31948</id>
    </interactant>
    <interactant intactId="EBI-366083">
        <id>P04637</id>
        <label>TP53</label>
    </interactant>
    <organismsDiffer>false</organismsDiffer>
    <experiments>4</experiments>
</comment>
<comment type="interaction">
    <interactant intactId="EBI-1054052">
        <id>P31948</id>
    </interactant>
    <interactant intactId="EBI-523498">
        <id>O00463</id>
        <label>TRAF5</label>
    </interactant>
    <organismsDiffer>false</organismsDiffer>
    <experiments>3</experiments>
</comment>
<comment type="subcellular location">
    <subcellularLocation>
        <location evidence="2">Cytoplasm</location>
    </subcellularLocation>
    <subcellularLocation>
        <location evidence="2">Nucleus</location>
    </subcellularLocation>
    <subcellularLocation>
        <location evidence="3">Dynein axonemal particle</location>
    </subcellularLocation>
</comment>
<comment type="alternative products">
    <event type="alternative splicing"/>
    <isoform>
        <id>P31948-1</id>
        <name>1</name>
        <sequence type="displayed"/>
    </isoform>
    <isoform>
        <id>P31948-2</id>
        <name>2</name>
        <sequence type="described" ref="VSP_055034"/>
    </isoform>
    <isoform>
        <id>P31948-3</id>
        <name>3</name>
        <sequence type="described" ref="VSP_055035"/>
    </isoform>
</comment>
<comment type="domain">
    <text>The TPR 1 repeat interacts with the C-terminal of HSC70. The TPR 4, 5 and 6 repeats (also called TPR2A domain) and TPR 7, 8 and 9 repeats (also called TPR2B domain) interact with HSP90.</text>
</comment>
<evidence type="ECO:0000250" key="1">
    <source>
        <dbReference type="UniProtKB" id="O35814"/>
    </source>
</evidence>
<evidence type="ECO:0000250" key="2">
    <source>
        <dbReference type="UniProtKB" id="Q60864"/>
    </source>
</evidence>
<evidence type="ECO:0000250" key="3">
    <source>
        <dbReference type="UniProtKB" id="Q7ZWU1"/>
    </source>
</evidence>
<evidence type="ECO:0000255" key="4"/>
<evidence type="ECO:0000256" key="5">
    <source>
        <dbReference type="SAM" id="MobiDB-lite"/>
    </source>
</evidence>
<evidence type="ECO:0000269" key="6">
    <source>
    </source>
</evidence>
<evidence type="ECO:0000269" key="7">
    <source>
    </source>
</evidence>
<evidence type="ECO:0000269" key="8">
    <source>
    </source>
</evidence>
<evidence type="ECO:0000269" key="9">
    <source>
    </source>
</evidence>
<evidence type="ECO:0000269" key="10">
    <source>
    </source>
</evidence>
<evidence type="ECO:0000269" key="11">
    <source>
    </source>
</evidence>
<evidence type="ECO:0000269" key="12">
    <source ref="8"/>
</evidence>
<evidence type="ECO:0000303" key="13">
    <source>
    </source>
</evidence>
<evidence type="ECO:0000303" key="14">
    <source>
    </source>
</evidence>
<evidence type="ECO:0000303" key="15">
    <source>
    </source>
</evidence>
<evidence type="ECO:0000305" key="16"/>
<evidence type="ECO:0000312" key="17">
    <source>
        <dbReference type="HGNC" id="HGNC:11387"/>
    </source>
</evidence>
<evidence type="ECO:0007744" key="18">
    <source>
    </source>
</evidence>
<evidence type="ECO:0007744" key="19">
    <source>
    </source>
</evidence>
<evidence type="ECO:0007744" key="20">
    <source>
    </source>
</evidence>
<evidence type="ECO:0007744" key="21">
    <source>
    </source>
</evidence>
<evidence type="ECO:0007744" key="22">
    <source>
    </source>
</evidence>
<evidence type="ECO:0007744" key="23">
    <source>
    </source>
</evidence>
<evidence type="ECO:0007744" key="24">
    <source>
    </source>
</evidence>
<evidence type="ECO:0007744" key="25">
    <source>
    </source>
</evidence>
<evidence type="ECO:0007744" key="26">
    <source>
    </source>
</evidence>
<evidence type="ECO:0007744" key="27">
    <source>
    </source>
</evidence>
<evidence type="ECO:0007744" key="28">
    <source>
    </source>
</evidence>
<evidence type="ECO:0007744" key="29">
    <source>
    </source>
</evidence>
<evidence type="ECO:0007744" key="30">
    <source>
    </source>
</evidence>
<evidence type="ECO:0007829" key="31">
    <source>
        <dbReference type="PDB" id="1ELR"/>
    </source>
</evidence>
<evidence type="ECO:0007829" key="32">
    <source>
        <dbReference type="PDB" id="1ELW"/>
    </source>
</evidence>
<evidence type="ECO:0007829" key="33">
    <source>
        <dbReference type="PDB" id="2LNI"/>
    </source>
</evidence>
<proteinExistence type="evidence at protein level"/>
<gene>
    <name evidence="17" type="primary">STIP1</name>
</gene>
<keyword id="KW-0002">3D-structure</keyword>
<keyword id="KW-0007">Acetylation</keyword>
<keyword id="KW-0025">Alternative splicing</keyword>
<keyword id="KW-0963">Cytoplasm</keyword>
<keyword id="KW-0903">Direct protein sequencing</keyword>
<keyword id="KW-1017">Isopeptide bond</keyword>
<keyword id="KW-0539">Nucleus</keyword>
<keyword id="KW-0597">Phosphoprotein</keyword>
<keyword id="KW-1267">Proteomics identification</keyword>
<keyword id="KW-1185">Reference proteome</keyword>
<keyword id="KW-0677">Repeat</keyword>
<keyword id="KW-0802">TPR repeat</keyword>
<keyword id="KW-0832">Ubl conjugation</keyword>
<feature type="chain" id="PRO_0000106372" description="Stress-induced-phosphoprotein 1">
    <location>
        <begin position="1"/>
        <end position="543"/>
    </location>
</feature>
<feature type="repeat" description="TPR 1">
    <location>
        <begin position="4"/>
        <end position="37"/>
    </location>
</feature>
<feature type="repeat" description="TPR 2">
    <location>
        <begin position="38"/>
        <end position="71"/>
    </location>
</feature>
<feature type="repeat" description="TPR 3">
    <location>
        <begin position="72"/>
        <end position="105"/>
    </location>
</feature>
<feature type="domain" description="STI1 1">
    <location>
        <begin position="130"/>
        <end position="169"/>
    </location>
</feature>
<feature type="repeat" description="TPR 4">
    <location>
        <begin position="225"/>
        <end position="258"/>
    </location>
</feature>
<feature type="repeat" description="TPR 5">
    <location>
        <begin position="259"/>
        <end position="292"/>
    </location>
</feature>
<feature type="repeat" description="TPR 6">
    <location>
        <begin position="300"/>
        <end position="333"/>
    </location>
</feature>
<feature type="repeat" description="TPR 7">
    <location>
        <begin position="360"/>
        <end position="393"/>
    </location>
</feature>
<feature type="repeat" description="TPR 8">
    <location>
        <begin position="394"/>
        <end position="427"/>
    </location>
</feature>
<feature type="repeat" description="TPR 9">
    <location>
        <begin position="428"/>
        <end position="461"/>
    </location>
</feature>
<feature type="domain" description="STI1 2">
    <location>
        <begin position="492"/>
        <end position="531"/>
    </location>
</feature>
<feature type="region of interest" description="Disordered" evidence="5">
    <location>
        <begin position="192"/>
        <end position="233"/>
    </location>
</feature>
<feature type="short sequence motif" description="Bipartite nuclear localization signal" evidence="4">
    <location>
        <begin position="222"/>
        <end position="239"/>
    </location>
</feature>
<feature type="compositionally biased region" description="Basic and acidic residues" evidence="5">
    <location>
        <begin position="205"/>
        <end position="233"/>
    </location>
</feature>
<feature type="modified residue" description="N-acetylmethionine" evidence="12 20 24">
    <location>
        <position position="1"/>
    </location>
</feature>
<feature type="modified residue" description="N6-acetyllysine" evidence="21">
    <location>
        <position position="8"/>
    </location>
</feature>
<feature type="modified residue" description="Phosphoserine" evidence="19 25">
    <location>
        <position position="16"/>
    </location>
</feature>
<feature type="modified residue" description="Phosphothreonine" evidence="26">
    <location>
        <position position="198"/>
    </location>
</feature>
<feature type="modified residue" description="N6-acetyllysine" evidence="21">
    <location>
        <position position="301"/>
    </location>
</feature>
<feature type="modified residue" description="N6-acetyllysine" evidence="21">
    <location>
        <position position="312"/>
    </location>
</feature>
<feature type="modified residue" description="N6-acetyllysine" evidence="21">
    <location>
        <position position="325"/>
    </location>
</feature>
<feature type="modified residue" description="Phosphothreonine" evidence="25">
    <location>
        <position position="332"/>
    </location>
</feature>
<feature type="modified residue" description="N6-acetyllysine" evidence="21">
    <location>
        <position position="344"/>
    </location>
</feature>
<feature type="modified residue" description="Phosphotyrosine" evidence="18">
    <location>
        <position position="354"/>
    </location>
</feature>
<feature type="modified residue" description="N6-acetyllysine" evidence="21">
    <location>
        <position position="446"/>
    </location>
</feature>
<feature type="modified residue" description="Phosphoserine" evidence="22 23 25">
    <location>
        <position position="481"/>
    </location>
</feature>
<feature type="cross-link" description="Glycyl lysine isopeptide (Lys-Gly) (interchain with G-Cter in SUMO1); alternate" evidence="27">
    <location>
        <position position="123"/>
    </location>
</feature>
<feature type="cross-link" description="Glycyl lysine isopeptide (Lys-Gly) (interchain with G-Cter in SUMO2); alternate" evidence="28 29 30">
    <location>
        <position position="123"/>
    </location>
</feature>
<feature type="cross-link" description="Glycyl lysine isopeptide (Lys-Gly) (interchain with G-Cter in SUMO1); alternate" evidence="27">
    <location>
        <position position="210"/>
    </location>
</feature>
<feature type="cross-link" description="Glycyl lysine isopeptide (Lys-Gly) (interchain with G-Cter in SUMO2); alternate" evidence="30">
    <location>
        <position position="210"/>
    </location>
</feature>
<feature type="splice variant" id="VSP_055034" description="In isoform 2." evidence="14">
    <original>MEQ</original>
    <variation>MESGSPMGEVEISRTIRTNGRGQRGYDWQCKRPIRVAEVRSSLHSWSLRW</variation>
    <location>
        <begin position="1"/>
        <end position="3"/>
    </location>
</feature>
<feature type="splice variant" id="VSP_055035" description="In isoform 3." evidence="13">
    <location>
        <begin position="74"/>
        <end position="97"/>
    </location>
</feature>
<feature type="sequence conflict" description="In Ref. 7; AAH39299." evidence="16" ref="7">
    <original>F</original>
    <variation>L</variation>
    <location>
        <position position="84"/>
    </location>
</feature>
<feature type="sequence conflict" description="In Ref. 4; BAG59782." evidence="16" ref="4">
    <original>K</original>
    <variation>E</variation>
    <location>
        <position position="364"/>
    </location>
</feature>
<feature type="sequence conflict" description="In Ref. 4; BAG59782." evidence="16" ref="4">
    <original>K</original>
    <variation>R</variation>
    <location>
        <position position="533"/>
    </location>
</feature>
<feature type="helix" evidence="32">
    <location>
        <begin position="3"/>
        <end position="16"/>
    </location>
</feature>
<feature type="helix" evidence="32">
    <location>
        <begin position="20"/>
        <end position="33"/>
    </location>
</feature>
<feature type="helix" evidence="32">
    <location>
        <begin position="38"/>
        <end position="51"/>
    </location>
</feature>
<feature type="helix" evidence="32">
    <location>
        <begin position="54"/>
        <end position="67"/>
    </location>
</feature>
<feature type="helix" evidence="32">
    <location>
        <begin position="72"/>
        <end position="84"/>
    </location>
</feature>
<feature type="helix" evidence="32">
    <location>
        <begin position="88"/>
        <end position="99"/>
    </location>
</feature>
<feature type="helix" evidence="32">
    <location>
        <begin position="106"/>
        <end position="117"/>
    </location>
</feature>
<feature type="helix" evidence="31">
    <location>
        <begin position="223"/>
        <end position="237"/>
    </location>
</feature>
<feature type="helix" evidence="31">
    <location>
        <begin position="241"/>
        <end position="254"/>
    </location>
</feature>
<feature type="helix" evidence="31">
    <location>
        <begin position="259"/>
        <end position="272"/>
    </location>
</feature>
<feature type="helix" evidence="31">
    <location>
        <begin position="275"/>
        <end position="291"/>
    </location>
</feature>
<feature type="helix" evidence="31">
    <location>
        <begin position="296"/>
        <end position="312"/>
    </location>
</feature>
<feature type="helix" evidence="31">
    <location>
        <begin position="316"/>
        <end position="329"/>
    </location>
</feature>
<feature type="helix" evidence="31">
    <location>
        <begin position="333"/>
        <end position="348"/>
    </location>
</feature>
<feature type="helix" evidence="33">
    <location>
        <begin position="359"/>
        <end position="372"/>
    </location>
</feature>
<feature type="helix" evidence="33">
    <location>
        <begin position="377"/>
        <end position="387"/>
    </location>
</feature>
<feature type="helix" evidence="33">
    <location>
        <begin position="394"/>
        <end position="404"/>
    </location>
</feature>
<feature type="turn" evidence="33">
    <location>
        <begin position="405"/>
        <end position="408"/>
    </location>
</feature>
<feature type="helix" evidence="33">
    <location>
        <begin position="410"/>
        <end position="423"/>
    </location>
</feature>
<feature type="helix" evidence="33">
    <location>
        <begin position="428"/>
        <end position="440"/>
    </location>
</feature>
<feature type="helix" evidence="33">
    <location>
        <begin position="444"/>
        <end position="457"/>
    </location>
</feature>
<feature type="helix" evidence="33">
    <location>
        <begin position="459"/>
        <end position="462"/>
    </location>
</feature>
<feature type="helix" evidence="33">
    <location>
        <begin position="463"/>
        <end position="475"/>
    </location>
</feature>
<reference key="1">
    <citation type="journal article" date="1992" name="J. Biol. Chem.">
        <title>Molecular cloning and expression of a transformation-sensitive human protein containing the TPR motif and sharing identity to the stress-inducible yeast protein STI1.</title>
        <authorList>
            <person name="Honore B."/>
            <person name="Leffers H."/>
            <person name="Madsen P."/>
            <person name="Rasmussen H.H."/>
            <person name="Vandekerckhove J."/>
            <person name="Celis J.E."/>
        </authorList>
    </citation>
    <scope>NUCLEOTIDE SEQUENCE [MRNA] (ISOFORM 1)</scope>
    <scope>PARTIAL PROTEIN SEQUENCE</scope>
</reference>
<reference key="2">
    <citation type="submission" date="2004-06" db="EMBL/GenBank/DDBJ databases">
        <title>Cloning of human full open reading frames in Gateway(TM) system entry vector (pDONR201).</title>
        <authorList>
            <person name="Ebert L."/>
            <person name="Schick M."/>
            <person name="Neubert P."/>
            <person name="Schatten R."/>
            <person name="Henze S."/>
            <person name="Korn B."/>
        </authorList>
    </citation>
    <scope>NUCLEOTIDE SEQUENCE [LARGE SCALE MRNA] (ISOFORM 1)</scope>
</reference>
<reference key="3">
    <citation type="submission" date="2004-10" db="EMBL/GenBank/DDBJ databases">
        <title>Cloning of human full-length CDSs in BD Creator(TM) system donor vector.</title>
        <authorList>
            <person name="Kalnine N."/>
            <person name="Chen X."/>
            <person name="Rolfs A."/>
            <person name="Halleck A."/>
            <person name="Hines L."/>
            <person name="Eisenstein S."/>
            <person name="Koundinya M."/>
            <person name="Raphael J."/>
            <person name="Moreira D."/>
            <person name="Kelley T."/>
            <person name="LaBaer J."/>
            <person name="Lin Y."/>
            <person name="Phelan M."/>
            <person name="Farmer A."/>
        </authorList>
    </citation>
    <scope>NUCLEOTIDE SEQUENCE [LARGE SCALE MRNA] (ISOFORM 1)</scope>
</reference>
<reference key="4">
    <citation type="journal article" date="2004" name="Nat. Genet.">
        <title>Complete sequencing and characterization of 21,243 full-length human cDNAs.</title>
        <authorList>
            <person name="Ota T."/>
            <person name="Suzuki Y."/>
            <person name="Nishikawa T."/>
            <person name="Otsuki T."/>
            <person name="Sugiyama T."/>
            <person name="Irie R."/>
            <person name="Wakamatsu A."/>
            <person name="Hayashi K."/>
            <person name="Sato H."/>
            <person name="Nagai K."/>
            <person name="Kimura K."/>
            <person name="Makita H."/>
            <person name="Sekine M."/>
            <person name="Obayashi M."/>
            <person name="Nishi T."/>
            <person name="Shibahara T."/>
            <person name="Tanaka T."/>
            <person name="Ishii S."/>
            <person name="Yamamoto J."/>
            <person name="Saito K."/>
            <person name="Kawai Y."/>
            <person name="Isono Y."/>
            <person name="Nakamura Y."/>
            <person name="Nagahari K."/>
            <person name="Murakami K."/>
            <person name="Yasuda T."/>
            <person name="Iwayanagi T."/>
            <person name="Wagatsuma M."/>
            <person name="Shiratori A."/>
            <person name="Sudo H."/>
            <person name="Hosoiri T."/>
            <person name="Kaku Y."/>
            <person name="Kodaira H."/>
            <person name="Kondo H."/>
            <person name="Sugawara M."/>
            <person name="Takahashi M."/>
            <person name="Kanda K."/>
            <person name="Yokoi T."/>
            <person name="Furuya T."/>
            <person name="Kikkawa E."/>
            <person name="Omura Y."/>
            <person name="Abe K."/>
            <person name="Kamihara K."/>
            <person name="Katsuta N."/>
            <person name="Sato K."/>
            <person name="Tanikawa M."/>
            <person name="Yamazaki M."/>
            <person name="Ninomiya K."/>
            <person name="Ishibashi T."/>
            <person name="Yamashita H."/>
            <person name="Murakawa K."/>
            <person name="Fujimori K."/>
            <person name="Tanai H."/>
            <person name="Kimata M."/>
            <person name="Watanabe M."/>
            <person name="Hiraoka S."/>
            <person name="Chiba Y."/>
            <person name="Ishida S."/>
            <person name="Ono Y."/>
            <person name="Takiguchi S."/>
            <person name="Watanabe S."/>
            <person name="Yosida M."/>
            <person name="Hotuta T."/>
            <person name="Kusano J."/>
            <person name="Kanehori K."/>
            <person name="Takahashi-Fujii A."/>
            <person name="Hara H."/>
            <person name="Tanase T.-O."/>
            <person name="Nomura Y."/>
            <person name="Togiya S."/>
            <person name="Komai F."/>
            <person name="Hara R."/>
            <person name="Takeuchi K."/>
            <person name="Arita M."/>
            <person name="Imose N."/>
            <person name="Musashino K."/>
            <person name="Yuuki H."/>
            <person name="Oshima A."/>
            <person name="Sasaki N."/>
            <person name="Aotsuka S."/>
            <person name="Yoshikawa Y."/>
            <person name="Matsunawa H."/>
            <person name="Ichihara T."/>
            <person name="Shiohata N."/>
            <person name="Sano S."/>
            <person name="Moriya S."/>
            <person name="Momiyama H."/>
            <person name="Satoh N."/>
            <person name="Takami S."/>
            <person name="Terashima Y."/>
            <person name="Suzuki O."/>
            <person name="Nakagawa S."/>
            <person name="Senoh A."/>
            <person name="Mizoguchi H."/>
            <person name="Goto Y."/>
            <person name="Shimizu F."/>
            <person name="Wakebe H."/>
            <person name="Hishigaki H."/>
            <person name="Watanabe T."/>
            <person name="Sugiyama A."/>
            <person name="Takemoto M."/>
            <person name="Kawakami B."/>
            <person name="Yamazaki M."/>
            <person name="Watanabe K."/>
            <person name="Kumagai A."/>
            <person name="Itakura S."/>
            <person name="Fukuzumi Y."/>
            <person name="Fujimori Y."/>
            <person name="Komiyama M."/>
            <person name="Tashiro H."/>
            <person name="Tanigami A."/>
            <person name="Fujiwara T."/>
            <person name="Ono T."/>
            <person name="Yamada K."/>
            <person name="Fujii Y."/>
            <person name="Ozaki K."/>
            <person name="Hirao M."/>
            <person name="Ohmori Y."/>
            <person name="Kawabata A."/>
            <person name="Hikiji T."/>
            <person name="Kobatake N."/>
            <person name="Inagaki H."/>
            <person name="Ikema Y."/>
            <person name="Okamoto S."/>
            <person name="Okitani R."/>
            <person name="Kawakami T."/>
            <person name="Noguchi S."/>
            <person name="Itoh T."/>
            <person name="Shigeta K."/>
            <person name="Senba T."/>
            <person name="Matsumura K."/>
            <person name="Nakajima Y."/>
            <person name="Mizuno T."/>
            <person name="Morinaga M."/>
            <person name="Sasaki M."/>
            <person name="Togashi T."/>
            <person name="Oyama M."/>
            <person name="Hata H."/>
            <person name="Watanabe M."/>
            <person name="Komatsu T."/>
            <person name="Mizushima-Sugano J."/>
            <person name="Satoh T."/>
            <person name="Shirai Y."/>
            <person name="Takahashi Y."/>
            <person name="Nakagawa K."/>
            <person name="Okumura K."/>
            <person name="Nagase T."/>
            <person name="Nomura N."/>
            <person name="Kikuchi H."/>
            <person name="Masuho Y."/>
            <person name="Yamashita R."/>
            <person name="Nakai K."/>
            <person name="Yada T."/>
            <person name="Nakamura Y."/>
            <person name="Ohara O."/>
            <person name="Isogai T."/>
            <person name="Sugano S."/>
        </authorList>
    </citation>
    <scope>NUCLEOTIDE SEQUENCE [LARGE SCALE MRNA] (ISOFORM 3)</scope>
    <source>
        <tissue>Brain</tissue>
    </source>
</reference>
<reference key="5">
    <citation type="journal article" date="2006" name="Nature">
        <title>Human chromosome 11 DNA sequence and analysis including novel gene identification.</title>
        <authorList>
            <person name="Taylor T.D."/>
            <person name="Noguchi H."/>
            <person name="Totoki Y."/>
            <person name="Toyoda A."/>
            <person name="Kuroki Y."/>
            <person name="Dewar K."/>
            <person name="Lloyd C."/>
            <person name="Itoh T."/>
            <person name="Takeda T."/>
            <person name="Kim D.-W."/>
            <person name="She X."/>
            <person name="Barlow K.F."/>
            <person name="Bloom T."/>
            <person name="Bruford E."/>
            <person name="Chang J.L."/>
            <person name="Cuomo C.A."/>
            <person name="Eichler E."/>
            <person name="FitzGerald M.G."/>
            <person name="Jaffe D.B."/>
            <person name="LaButti K."/>
            <person name="Nicol R."/>
            <person name="Park H.-S."/>
            <person name="Seaman C."/>
            <person name="Sougnez C."/>
            <person name="Yang X."/>
            <person name="Zimmer A.R."/>
            <person name="Zody M.C."/>
            <person name="Birren B.W."/>
            <person name="Nusbaum C."/>
            <person name="Fujiyama A."/>
            <person name="Hattori M."/>
            <person name="Rogers J."/>
            <person name="Lander E.S."/>
            <person name="Sakaki Y."/>
        </authorList>
    </citation>
    <scope>NUCLEOTIDE SEQUENCE [LARGE SCALE GENOMIC DNA]</scope>
</reference>
<reference key="6">
    <citation type="submission" date="2005-07" db="EMBL/GenBank/DDBJ databases">
        <authorList>
            <person name="Mural R.J."/>
            <person name="Istrail S."/>
            <person name="Sutton G.G."/>
            <person name="Florea L."/>
            <person name="Halpern A.L."/>
            <person name="Mobarry C.M."/>
            <person name="Lippert R."/>
            <person name="Walenz B."/>
            <person name="Shatkay H."/>
            <person name="Dew I."/>
            <person name="Miller J.R."/>
            <person name="Flanigan M.J."/>
            <person name="Edwards N.J."/>
            <person name="Bolanos R."/>
            <person name="Fasulo D."/>
            <person name="Halldorsson B.V."/>
            <person name="Hannenhalli S."/>
            <person name="Turner R."/>
            <person name="Yooseph S."/>
            <person name="Lu F."/>
            <person name="Nusskern D.R."/>
            <person name="Shue B.C."/>
            <person name="Zheng X.H."/>
            <person name="Zhong F."/>
            <person name="Delcher A.L."/>
            <person name="Huson D.H."/>
            <person name="Kravitz S.A."/>
            <person name="Mouchard L."/>
            <person name="Reinert K."/>
            <person name="Remington K.A."/>
            <person name="Clark A.G."/>
            <person name="Waterman M.S."/>
            <person name="Eichler E.E."/>
            <person name="Adams M.D."/>
            <person name="Hunkapiller M.W."/>
            <person name="Myers E.W."/>
            <person name="Venter J.C."/>
        </authorList>
    </citation>
    <scope>NUCLEOTIDE SEQUENCE [LARGE SCALE GENOMIC DNA]</scope>
</reference>
<reference key="7">
    <citation type="journal article" date="2004" name="Genome Res.">
        <title>The status, quality, and expansion of the NIH full-length cDNA project: the Mammalian Gene Collection (MGC).</title>
        <authorList>
            <consortium name="The MGC Project Team"/>
        </authorList>
    </citation>
    <scope>NUCLEOTIDE SEQUENCE [LARGE SCALE MRNA] (ISOFORMS 1 AND 2)</scope>
    <source>
        <tissue>Lung</tissue>
        <tissue>Testis</tissue>
    </source>
</reference>
<reference key="8">
    <citation type="submission" date="2004-10" db="UniProtKB">
        <authorList>
            <person name="Bienvenut W.V."/>
        </authorList>
    </citation>
    <scope>PROTEIN SEQUENCE OF 1-10; 110-118; 345-364; 382-389; 479-486 AND 534-543</scope>
    <scope>ACETYLATION AT MET-1</scope>
    <scope>IDENTIFICATION BY MASS SPECTROMETRY</scope>
    <source>
        <tissue>B-cell lymphoma</tissue>
    </source>
</reference>
<reference key="9">
    <citation type="submission" date="2008-12" db="UniProtKB">
        <authorList>
            <person name="Lubec G."/>
            <person name="Vishwanath V."/>
            <person name="Chen W.-Q."/>
            <person name="Sun Y."/>
        </authorList>
    </citation>
    <scope>PROTEIN SEQUENCE OF 33-44; 64-73; 79-87; 154-160; 253-272; 306-312; 352-364; 407-429; 454-462; 489-513 AND 534-543</scope>
    <scope>IDENTIFICATION BY MASS SPECTROMETRY</scope>
    <source>
        <tissue>Brain</tissue>
        <tissue>Cajal-Retzius cell</tissue>
        <tissue>Fetal brain cortex</tissue>
    </source>
</reference>
<reference key="10">
    <citation type="journal article" date="1992" name="Electrophoresis">
        <title>Microsequences of 145 proteins recorded in the two-dimensional gel protein database of normal human epidermal keratinocytes.</title>
        <authorList>
            <person name="Rasmussen H.H."/>
            <person name="van Damme J."/>
            <person name="Puype M."/>
            <person name="Gesser B."/>
            <person name="Celis J.E."/>
            <person name="Vandekerckhove J."/>
        </authorList>
    </citation>
    <scope>PROTEIN SEQUENCE OF 101-109; 352-364 AND 374-381</scope>
    <source>
        <tissue>Keratinocyte</tissue>
    </source>
</reference>
<reference key="11">
    <citation type="journal article" date="1997" name="J. Biol. Chem.">
        <title>Protein phosphatase 5 is a major component of glucocorticoid receptor.hsp90 complexes with properties of an FK506-binding immunophilin.</title>
        <authorList>
            <person name="Silverstein A.M."/>
            <person name="Galigniana M.D."/>
            <person name="Chen M.S."/>
            <person name="Owens-Grillo J.K."/>
            <person name="Chinkers M."/>
            <person name="Pratt W.B."/>
        </authorList>
    </citation>
    <scope>INTERACTION WITH HSP90AA1</scope>
</reference>
<reference key="12">
    <citation type="journal article" date="1999" name="Int. J. Cancer">
        <title>Antigens recognized by autologous antibody in patients with renal-cell carcinoma.</title>
        <authorList>
            <person name="Scanlan M.J."/>
            <person name="Gordan J.D."/>
            <person name="Williamson B."/>
            <person name="Stockert E."/>
            <person name="Bander N.H."/>
            <person name="Jongeneel C.V."/>
            <person name="Gure A.O."/>
            <person name="Jaeger D."/>
            <person name="Jaeger E."/>
            <person name="Knuth A."/>
            <person name="Chen Y.-T."/>
            <person name="Old L.J."/>
        </authorList>
    </citation>
    <scope>IDENTIFICATION AS A RENAL CANCER ANTIGEN</scope>
    <source>
        <tissue>Renal cell carcinoma</tissue>
    </source>
</reference>
<reference key="13">
    <citation type="journal article" date="2003" name="J. Biol. Chem.">
        <title>A product of the human gene adjacent to parkin is a component of Lewy bodies and suppresses Pael receptor-induced cell death.</title>
        <authorList>
            <person name="Imai Y."/>
            <person name="Soda M."/>
            <person name="Murakami T."/>
            <person name="Shoji M."/>
            <person name="Abe K."/>
            <person name="Takahashi R."/>
        </authorList>
    </citation>
    <scope>INTERACTION WITH PACRG</scope>
</reference>
<reference key="14">
    <citation type="journal article" date="2005" name="Nat. Biotechnol.">
        <title>Immunoaffinity profiling of tyrosine phosphorylation in cancer cells.</title>
        <authorList>
            <person name="Rush J."/>
            <person name="Moritz A."/>
            <person name="Lee K.A."/>
            <person name="Guo A."/>
            <person name="Goss V.L."/>
            <person name="Spek E.J."/>
            <person name="Zhang H."/>
            <person name="Zha X.-M."/>
            <person name="Polakiewicz R.D."/>
            <person name="Comb M.J."/>
        </authorList>
    </citation>
    <scope>PHOSPHORYLATION [LARGE SCALE ANALYSIS] AT TYR-354</scope>
    <scope>IDENTIFICATION BY MASS SPECTROMETRY [LARGE SCALE ANALYSIS]</scope>
</reference>
<reference key="15">
    <citation type="journal article" date="2008" name="Proc. Natl. Acad. Sci. U.S.A.">
        <title>A quantitative atlas of mitotic phosphorylation.</title>
        <authorList>
            <person name="Dephoure N."/>
            <person name="Zhou C."/>
            <person name="Villen J."/>
            <person name="Beausoleil S.A."/>
            <person name="Bakalarski C.E."/>
            <person name="Elledge S.J."/>
            <person name="Gygi S.P."/>
        </authorList>
    </citation>
    <scope>PHOSPHORYLATION [LARGE SCALE ANALYSIS] AT SER-16</scope>
    <scope>IDENTIFICATION BY MASS SPECTROMETRY [LARGE SCALE ANALYSIS]</scope>
    <source>
        <tissue>Cervix carcinoma</tissue>
    </source>
</reference>
<reference key="16">
    <citation type="journal article" date="2009" name="Anal. Chem.">
        <title>Lys-N and trypsin cover complementary parts of the phosphoproteome in a refined SCX-based approach.</title>
        <authorList>
            <person name="Gauci S."/>
            <person name="Helbig A.O."/>
            <person name="Slijper M."/>
            <person name="Krijgsveld J."/>
            <person name="Heck A.J."/>
            <person name="Mohammed S."/>
        </authorList>
    </citation>
    <scope>ACETYLATION [LARGE SCALE ANALYSIS] AT MET-1</scope>
    <scope>IDENTIFICATION BY MASS SPECTROMETRY [LARGE SCALE ANALYSIS]</scope>
</reference>
<reference key="17">
    <citation type="journal article" date="2009" name="Science">
        <title>Lysine acetylation targets protein complexes and co-regulates major cellular functions.</title>
        <authorList>
            <person name="Choudhary C."/>
            <person name="Kumar C."/>
            <person name="Gnad F."/>
            <person name="Nielsen M.L."/>
            <person name="Rehman M."/>
            <person name="Walther T.C."/>
            <person name="Olsen J.V."/>
            <person name="Mann M."/>
        </authorList>
    </citation>
    <scope>ACETYLATION [LARGE SCALE ANALYSIS] AT LYS-8; LYS-301; LYS-312; LYS-325; LYS-344 AND LYS-446</scope>
    <scope>IDENTIFICATION BY MASS SPECTROMETRY [LARGE SCALE ANALYSIS]</scope>
</reference>
<reference key="18">
    <citation type="journal article" date="2010" name="Sci. Signal.">
        <title>Quantitative phosphoproteomics reveals widespread full phosphorylation site occupancy during mitosis.</title>
        <authorList>
            <person name="Olsen J.V."/>
            <person name="Vermeulen M."/>
            <person name="Santamaria A."/>
            <person name="Kumar C."/>
            <person name="Miller M.L."/>
            <person name="Jensen L.J."/>
            <person name="Gnad F."/>
            <person name="Cox J."/>
            <person name="Jensen T.S."/>
            <person name="Nigg E.A."/>
            <person name="Brunak S."/>
            <person name="Mann M."/>
        </authorList>
    </citation>
    <scope>PHOSPHORYLATION [LARGE SCALE ANALYSIS] AT SER-481</scope>
    <scope>IDENTIFICATION BY MASS SPECTROMETRY [LARGE SCALE ANALYSIS]</scope>
    <source>
        <tissue>Cervix carcinoma</tissue>
    </source>
</reference>
<reference key="19">
    <citation type="journal article" date="2011" name="BMC Syst. Biol.">
        <title>Initial characterization of the human central proteome.</title>
        <authorList>
            <person name="Burkard T.R."/>
            <person name="Planyavsky M."/>
            <person name="Kaupe I."/>
            <person name="Breitwieser F.P."/>
            <person name="Buerckstuemmer T."/>
            <person name="Bennett K.L."/>
            <person name="Superti-Furga G."/>
            <person name="Colinge J."/>
        </authorList>
    </citation>
    <scope>IDENTIFICATION BY MASS SPECTROMETRY [LARGE SCALE ANALYSIS]</scope>
</reference>
<reference key="20">
    <citation type="journal article" date="2011" name="Sci. Signal.">
        <title>System-wide temporal characterization of the proteome and phosphoproteome of human embryonic stem cell differentiation.</title>
        <authorList>
            <person name="Rigbolt K.T."/>
            <person name="Prokhorova T.A."/>
            <person name="Akimov V."/>
            <person name="Henningsen J."/>
            <person name="Johansen P.T."/>
            <person name="Kratchmarova I."/>
            <person name="Kassem M."/>
            <person name="Mann M."/>
            <person name="Olsen J.V."/>
            <person name="Blagoev B."/>
        </authorList>
    </citation>
    <scope>PHOSPHORYLATION [LARGE SCALE ANALYSIS] AT SER-481</scope>
    <scope>IDENTIFICATION BY MASS SPECTROMETRY [LARGE SCALE ANALYSIS]</scope>
</reference>
<reference key="21">
    <citation type="journal article" date="2012" name="Mol. Cell. Proteomics">
        <title>Comparative large-scale characterisation of plant vs. mammal proteins reveals similar and idiosyncratic N-alpha acetylation features.</title>
        <authorList>
            <person name="Bienvenut W.V."/>
            <person name="Sumpton D."/>
            <person name="Martinez A."/>
            <person name="Lilla S."/>
            <person name="Espagne C."/>
            <person name="Meinnel T."/>
            <person name="Giglione C."/>
        </authorList>
    </citation>
    <scope>ACETYLATION [LARGE SCALE ANALYSIS] AT MET-1</scope>
    <scope>IDENTIFICATION BY MASS SPECTROMETRY [LARGE SCALE ANALYSIS]</scope>
</reference>
<reference key="22">
    <citation type="journal article" date="2013" name="J. Proteome Res.">
        <title>Toward a comprehensive characterization of a human cancer cell phosphoproteome.</title>
        <authorList>
            <person name="Zhou H."/>
            <person name="Di Palma S."/>
            <person name="Preisinger C."/>
            <person name="Peng M."/>
            <person name="Polat A.N."/>
            <person name="Heck A.J."/>
            <person name="Mohammed S."/>
        </authorList>
    </citation>
    <scope>PHOSPHORYLATION [LARGE SCALE ANALYSIS] AT SER-16; THR-332 AND SER-481</scope>
    <scope>IDENTIFICATION BY MASS SPECTROMETRY [LARGE SCALE ANALYSIS]</scope>
    <source>
        <tissue>Cervix carcinoma</tissue>
        <tissue>Erythroleukemia</tissue>
    </source>
</reference>
<reference key="23">
    <citation type="journal article" date="2013" name="PLoS Genet.">
        <title>A newly uncovered group of distantly related lysine methyltransferases preferentially interact with molecular chaperones to regulate their activity.</title>
        <authorList>
            <person name="Cloutier P."/>
            <person name="Lavallee-Adam M."/>
            <person name="Faubert D."/>
            <person name="Blanchette M."/>
            <person name="Coulombe B."/>
        </authorList>
    </citation>
    <scope>INTERACTION WITH EEF1AKMT3</scope>
</reference>
<reference key="24">
    <citation type="journal article" date="2014" name="Cancer Lett.">
        <title>SMYD2-dependent HSP90 methylation promotes cancer cell proliferation by regulating the chaperone complex formation.</title>
        <authorList>
            <person name="Hamamoto R."/>
            <person name="Toyokawa G."/>
            <person name="Nakakido M."/>
            <person name="Ueda K."/>
            <person name="Nakamura Y."/>
        </authorList>
    </citation>
    <scope>INTERACTION WITH HSP90AB1</scope>
</reference>
<reference key="25">
    <citation type="journal article" date="2014" name="J. Proteomics">
        <title>An enzyme assisted RP-RPLC approach for in-depth analysis of human liver phosphoproteome.</title>
        <authorList>
            <person name="Bian Y."/>
            <person name="Song C."/>
            <person name="Cheng K."/>
            <person name="Dong M."/>
            <person name="Wang F."/>
            <person name="Huang J."/>
            <person name="Sun D."/>
            <person name="Wang L."/>
            <person name="Ye M."/>
            <person name="Zou H."/>
        </authorList>
    </citation>
    <scope>PHOSPHORYLATION [LARGE SCALE ANALYSIS] AT THR-198</scope>
    <scope>IDENTIFICATION BY MASS SPECTROMETRY [LARGE SCALE ANALYSIS]</scope>
    <source>
        <tissue>Liver</tissue>
    </source>
</reference>
<reference key="26">
    <citation type="journal article" date="2014" name="Nat. Struct. Mol. Biol.">
        <title>Uncovering global SUMOylation signaling networks in a site-specific manner.</title>
        <authorList>
            <person name="Hendriks I.A."/>
            <person name="D'Souza R.C."/>
            <person name="Yang B."/>
            <person name="Verlaan-de Vries M."/>
            <person name="Mann M."/>
            <person name="Vertegaal A.C."/>
        </authorList>
    </citation>
    <scope>SUMOYLATION [LARGE SCALE ANALYSIS] AT LYS-123</scope>
    <scope>IDENTIFICATION BY MASS SPECTROMETRY [LARGE SCALE ANALYSIS]</scope>
</reference>
<reference key="27">
    <citation type="journal article" date="2014" name="Proc. Natl. Acad. Sci. U.S.A.">
        <title>Mapping of SUMO sites and analysis of SUMOylation changes induced by external stimuli.</title>
        <authorList>
            <person name="Impens F."/>
            <person name="Radoshevich L."/>
            <person name="Cossart P."/>
            <person name="Ribet D."/>
        </authorList>
    </citation>
    <scope>SUMOYLATION [LARGE SCALE ANALYSIS] AT LYS-123 AND LYS-210</scope>
    <scope>IDENTIFICATION BY MASS SPECTROMETRY [LARGE SCALE ANALYSIS]</scope>
</reference>
<reference key="28">
    <citation type="journal article" date="2015" name="Cell Rep.">
        <title>SUMO-2 orchestrates chromatin modifiers in response to DNA damage.</title>
        <authorList>
            <person name="Hendriks I.A."/>
            <person name="Treffers L.W."/>
            <person name="Verlaan-de Vries M."/>
            <person name="Olsen J.V."/>
            <person name="Vertegaal A.C."/>
        </authorList>
    </citation>
    <scope>SUMOYLATION [LARGE SCALE ANALYSIS] AT LYS-123</scope>
    <scope>IDENTIFICATION BY MASS SPECTROMETRY [LARGE SCALE ANALYSIS]</scope>
</reference>
<reference key="29">
    <citation type="journal article" date="2015" name="Proteomics">
        <title>N-terminome analysis of the human mitochondrial proteome.</title>
        <authorList>
            <person name="Vaca Jacome A.S."/>
            <person name="Rabilloud T."/>
            <person name="Schaeffer-Reiss C."/>
            <person name="Rompais M."/>
            <person name="Ayoub D."/>
            <person name="Lane L."/>
            <person name="Bairoch A."/>
            <person name="Van Dorsselaer A."/>
            <person name="Carapito C."/>
        </authorList>
    </citation>
    <scope>IDENTIFICATION BY MASS SPECTROMETRY [LARGE SCALE ANALYSIS]</scope>
</reference>
<reference key="30">
    <citation type="journal article" date="2016" name="Nat. Commun.">
        <title>The FNIP co-chaperones decelerate the Hsp90 chaperone cycle and enhance drug binding.</title>
        <authorList>
            <person name="Woodford M.R."/>
            <person name="Dunn D.M."/>
            <person name="Blanden A.R."/>
            <person name="Capriotti D."/>
            <person name="Loiselle D."/>
            <person name="Prodromou C."/>
            <person name="Panaretou B."/>
            <person name="Hughes P.F."/>
            <person name="Smith A."/>
            <person name="Ackerman W."/>
            <person name="Haystead T.A."/>
            <person name="Loh S.N."/>
            <person name="Bourboulia D."/>
            <person name="Schmidt L.S."/>
            <person name="Marston Linehan W."/>
            <person name="Bratslavsky G."/>
            <person name="Mollapour M."/>
        </authorList>
    </citation>
    <scope>FUNCTION</scope>
    <scope>INTERACTION WITH HSP90AA1; FLCN; FNIP1 AND FNIP2</scope>
</reference>
<reference key="31">
    <citation type="journal article" date="2017" name="EMBO J.">
        <title>Tumor suppressor Tsc1 is a new Hsp90 co-chaperone that facilitates folding of kinase and non-kinase clients.</title>
        <authorList>
            <person name="Woodford M.R."/>
            <person name="Sager R.A."/>
            <person name="Marris E."/>
            <person name="Dunn D.M."/>
            <person name="Blanden A.R."/>
            <person name="Murphy R.L."/>
            <person name="Rensing N."/>
            <person name="Shapiro O."/>
            <person name="Panaretou B."/>
            <person name="Prodromou C."/>
            <person name="Loh S.N."/>
            <person name="Gutmann D.H."/>
            <person name="Bourboulia D."/>
            <person name="Bratslavsky G."/>
            <person name="Wong M."/>
            <person name="Mollapour M."/>
        </authorList>
    </citation>
    <scope>IDENTIFICATION IN A COMPLEX WITH HSP90; HSP70; PTGES3; CDC37; PPP5C; TSC1 AND TSC2</scope>
</reference>
<reference key="32">
    <citation type="journal article" date="2017" name="Nat. Struct. Mol. Biol.">
        <title>Site-specific mapping of the human SUMO proteome reveals co-modification with phosphorylation.</title>
        <authorList>
            <person name="Hendriks I.A."/>
            <person name="Lyon D."/>
            <person name="Young C."/>
            <person name="Jensen L.J."/>
            <person name="Vertegaal A.C."/>
            <person name="Nielsen M.L."/>
        </authorList>
    </citation>
    <scope>SUMOYLATION [LARGE SCALE ANALYSIS] AT LYS-123 AND LYS-210</scope>
    <scope>IDENTIFICATION BY MASS SPECTROMETRY [LARGE SCALE ANALYSIS]</scope>
</reference>
<reference key="33">
    <citation type="journal article" date="2000" name="Cell">
        <title>Structure of TPR domain-peptide complexes: critical elements in the assembly of the Hsp70-Hsp90 multichaperone machine.</title>
        <authorList>
            <person name="Scheufler C."/>
            <person name="Brinker A."/>
            <person name="Bourenkov G."/>
            <person name="Pegoraro S."/>
            <person name="Moroder L."/>
            <person name="Bartunik H."/>
            <person name="Hartl F.U."/>
            <person name="Moarefi I."/>
        </authorList>
    </citation>
    <scope>X-RAY CRYSTALLOGRAPHY (1.9 ANGSTROMS) OF 223-349</scope>
</reference>
<protein>
    <recommendedName>
        <fullName>Stress-induced-phosphoprotein 1</fullName>
        <shortName>STI1</shortName>
    </recommendedName>
    <alternativeName>
        <fullName>Hsc70/Hsp90-organizing protein</fullName>
        <shortName>Hop</shortName>
    </alternativeName>
    <alternativeName>
        <fullName>Renal carcinoma antigen NY-REN-11</fullName>
    </alternativeName>
    <alternativeName>
        <fullName>Transformation-sensitive protein IEF SSP 3521</fullName>
    </alternativeName>
</protein>
<sequence length="543" mass="62639">MEQVNELKEKGNKALSVGNIDDALQCYSEAIKLDPHNHVLYSNRSAAYAKKGDYQKAYEDGCKTVDLKPDWGKGYSRKAAALEFLNRFEEAKRTYEEGLKHEANNPQLKEGLQNMEARLAERKFMNPFNMPNLYQKLESDPRTRTLLSDPTYRELIEQLRNKPSDLGTKLQDPRIMTTLSVLLGVDLGSMDEEEEIATPPPPPPPKKETKPEPMEEDLPENKKQALKEKELGNDAYKKKDFDTALKHYDKAKELDPTNMTYITNQAAVYFEKGDYNKCRELCEKAIEVGRENREDYRQIAKAYARIGNSYFKEEKYKDAIHFYNKSLAEHRTPDVLKKCQQAEKILKEQERLAYINPDLALEEKNKGNECFQKGDYPQAMKHYTEAIKRNPKDAKLYSNRAACYTKLLEFQLALKDCEECIQLEPTFIKGYTRKAAALEAMKDYTKAMDVYQKALDLDSSCKEAADGYQRCMMAQYNRHDSPEDVKRRAMADPEVQQIMSDPAMRLILEQMQKDPQALSEHLKNPVIAQKIQKLMDVGLIAIR</sequence>
<dbReference type="EMBL" id="M86752">
    <property type="protein sequence ID" value="AAA58682.1"/>
    <property type="molecule type" value="mRNA"/>
</dbReference>
<dbReference type="EMBL" id="BT020010">
    <property type="protein sequence ID" value="AAV38813.1"/>
    <property type="molecule type" value="mRNA"/>
</dbReference>
<dbReference type="EMBL" id="BT020011">
    <property type="protein sequence ID" value="AAV38814.1"/>
    <property type="molecule type" value="mRNA"/>
</dbReference>
<dbReference type="EMBL" id="CR536512">
    <property type="protein sequence ID" value="CAG38750.1"/>
    <property type="molecule type" value="mRNA"/>
</dbReference>
<dbReference type="EMBL" id="AK297319">
    <property type="protein sequence ID" value="BAG59782.1"/>
    <property type="molecule type" value="mRNA"/>
</dbReference>
<dbReference type="EMBL" id="AP005668">
    <property type="status" value="NOT_ANNOTATED_CDS"/>
    <property type="molecule type" value="Genomic_DNA"/>
</dbReference>
<dbReference type="EMBL" id="CH471076">
    <property type="protein sequence ID" value="EAW74196.1"/>
    <property type="molecule type" value="Genomic_DNA"/>
</dbReference>
<dbReference type="EMBL" id="CH471076">
    <property type="protein sequence ID" value="EAW74197.1"/>
    <property type="molecule type" value="Genomic_DNA"/>
</dbReference>
<dbReference type="EMBL" id="BC002987">
    <property type="protein sequence ID" value="AAH02987.1"/>
    <property type="molecule type" value="mRNA"/>
</dbReference>
<dbReference type="EMBL" id="BC039299">
    <property type="protein sequence ID" value="AAH39299.1"/>
    <property type="molecule type" value="mRNA"/>
</dbReference>
<dbReference type="CCDS" id="CCDS60827.1">
    <molecule id="P31948-2"/>
</dbReference>
<dbReference type="CCDS" id="CCDS60828.1">
    <molecule id="P31948-3"/>
</dbReference>
<dbReference type="CCDS" id="CCDS8058.1">
    <molecule id="P31948-1"/>
</dbReference>
<dbReference type="PIR" id="A38093">
    <property type="entry name" value="A38093"/>
</dbReference>
<dbReference type="RefSeq" id="NP_001269581.1">
    <molecule id="P31948-2"/>
    <property type="nucleotide sequence ID" value="NM_001282652.2"/>
</dbReference>
<dbReference type="RefSeq" id="NP_001269582.1">
    <molecule id="P31948-3"/>
    <property type="nucleotide sequence ID" value="NM_001282653.2"/>
</dbReference>
<dbReference type="RefSeq" id="NP_006810.1">
    <molecule id="P31948-1"/>
    <property type="nucleotide sequence ID" value="NM_006819.3"/>
</dbReference>
<dbReference type="PDB" id="1ELR">
    <property type="method" value="X-ray"/>
    <property type="resolution" value="1.90 A"/>
    <property type="chains" value="A=223-352"/>
</dbReference>
<dbReference type="PDB" id="1ELW">
    <property type="method" value="X-ray"/>
    <property type="resolution" value="1.60 A"/>
    <property type="chains" value="A/B=1-118"/>
</dbReference>
<dbReference type="PDB" id="2LNI">
    <property type="method" value="NMR"/>
    <property type="chains" value="A=356-477"/>
</dbReference>
<dbReference type="PDB" id="2NC9">
    <property type="method" value="NMR"/>
    <property type="chains" value="A=220-350"/>
</dbReference>
<dbReference type="PDB" id="3ESK">
    <property type="method" value="X-ray"/>
    <property type="resolution" value="2.05 A"/>
    <property type="chains" value="A=223-350"/>
</dbReference>
<dbReference type="PDB" id="3FWV">
    <property type="method" value="X-ray"/>
    <property type="resolution" value="2.20 A"/>
    <property type="chains" value="A/B=223-349"/>
</dbReference>
<dbReference type="PDB" id="7KW7">
    <property type="method" value="EM"/>
    <property type="resolution" value="3.57 A"/>
    <property type="chains" value="E=1-543"/>
</dbReference>
<dbReference type="PDBsum" id="1ELR"/>
<dbReference type="PDBsum" id="1ELW"/>
<dbReference type="PDBsum" id="2LNI"/>
<dbReference type="PDBsum" id="2NC9"/>
<dbReference type="PDBsum" id="3ESK"/>
<dbReference type="PDBsum" id="3FWV"/>
<dbReference type="PDBsum" id="7KW7"/>
<dbReference type="EMDB" id="EMD-23050"/>
<dbReference type="EMDB" id="EMD-5981"/>
<dbReference type="SMR" id="P31948"/>
<dbReference type="BioGRID" id="116162">
    <property type="interactions" value="1047"/>
</dbReference>
<dbReference type="CORUM" id="P31948"/>
<dbReference type="DIP" id="DIP-41085N"/>
<dbReference type="FunCoup" id="P31948">
    <property type="interactions" value="3000"/>
</dbReference>
<dbReference type="IntAct" id="P31948">
    <property type="interactions" value="231"/>
</dbReference>
<dbReference type="MINT" id="P31948"/>
<dbReference type="STRING" id="9606.ENSP00000351646"/>
<dbReference type="ChEMBL" id="CHEMBL4523216"/>
<dbReference type="DrugBank" id="DB09130">
    <property type="generic name" value="Copper"/>
</dbReference>
<dbReference type="GlyCosmos" id="P31948">
    <property type="glycosylation" value="2 sites, 1 glycan"/>
</dbReference>
<dbReference type="GlyGen" id="P31948">
    <property type="glycosylation" value="4 sites, 1 N-linked glycan (1 site), 1 O-linked glycan (3 sites)"/>
</dbReference>
<dbReference type="iPTMnet" id="P31948"/>
<dbReference type="MetOSite" id="P31948"/>
<dbReference type="PhosphoSitePlus" id="P31948"/>
<dbReference type="SwissPalm" id="P31948"/>
<dbReference type="BioMuta" id="STIP1"/>
<dbReference type="DMDM" id="400042"/>
<dbReference type="REPRODUCTION-2DPAGE" id="IPI00013894"/>
<dbReference type="jPOST" id="P31948"/>
<dbReference type="MassIVE" id="P31948"/>
<dbReference type="PaxDb" id="9606-ENSP00000351646"/>
<dbReference type="PeptideAtlas" id="P31948"/>
<dbReference type="ProteomicsDB" id="25436"/>
<dbReference type="ProteomicsDB" id="33721"/>
<dbReference type="ProteomicsDB" id="54820">
    <molecule id="P31948-1"/>
</dbReference>
<dbReference type="Pumba" id="P31948"/>
<dbReference type="TopDownProteomics" id="P31948-1">
    <molecule id="P31948-1"/>
</dbReference>
<dbReference type="Antibodypedia" id="15273">
    <property type="antibodies" value="438 antibodies from 40 providers"/>
</dbReference>
<dbReference type="DNASU" id="10963"/>
<dbReference type="Ensembl" id="ENST00000305218.9">
    <molecule id="P31948-1"/>
    <property type="protein sequence ID" value="ENSP00000305958.5"/>
    <property type="gene ID" value="ENSG00000168439.17"/>
</dbReference>
<dbReference type="Ensembl" id="ENST00000358794.9">
    <molecule id="P31948-2"/>
    <property type="protein sequence ID" value="ENSP00000351646.5"/>
    <property type="gene ID" value="ENSG00000168439.17"/>
</dbReference>
<dbReference type="Ensembl" id="ENST00000538945.5">
    <molecule id="P31948-3"/>
    <property type="protein sequence ID" value="ENSP00000445957.1"/>
    <property type="gene ID" value="ENSG00000168439.17"/>
</dbReference>
<dbReference type="GeneID" id="10963"/>
<dbReference type="KEGG" id="hsa:10963"/>
<dbReference type="MANE-Select" id="ENST00000305218.9">
    <property type="protein sequence ID" value="ENSP00000305958.5"/>
    <property type="RefSeq nucleotide sequence ID" value="NM_006819.3"/>
    <property type="RefSeq protein sequence ID" value="NP_006810.1"/>
</dbReference>
<dbReference type="UCSC" id="uc010rnb.2">
    <molecule id="P31948-1"/>
    <property type="organism name" value="human"/>
</dbReference>
<dbReference type="AGR" id="HGNC:11387"/>
<dbReference type="CTD" id="10963"/>
<dbReference type="DisGeNET" id="10963"/>
<dbReference type="GeneCards" id="STIP1"/>
<dbReference type="HGNC" id="HGNC:11387">
    <property type="gene designation" value="STIP1"/>
</dbReference>
<dbReference type="HPA" id="ENSG00000168439">
    <property type="expression patterns" value="Low tissue specificity"/>
</dbReference>
<dbReference type="MIM" id="605063">
    <property type="type" value="gene"/>
</dbReference>
<dbReference type="neXtProt" id="NX_P31948"/>
<dbReference type="OpenTargets" id="ENSG00000168439"/>
<dbReference type="PharmGKB" id="PA36196"/>
<dbReference type="VEuPathDB" id="HostDB:ENSG00000168439"/>
<dbReference type="eggNOG" id="KOG0548">
    <property type="taxonomic scope" value="Eukaryota"/>
</dbReference>
<dbReference type="GeneTree" id="ENSGT00940000154911"/>
<dbReference type="HOGENOM" id="CLU_000134_46_5_1"/>
<dbReference type="InParanoid" id="P31948"/>
<dbReference type="OMA" id="MYSAREN"/>
<dbReference type="OrthoDB" id="2423701at2759"/>
<dbReference type="PAN-GO" id="P31948">
    <property type="GO annotations" value="1 GO annotation based on evolutionary models"/>
</dbReference>
<dbReference type="PhylomeDB" id="P31948"/>
<dbReference type="TreeFam" id="TF300478"/>
<dbReference type="PathwayCommons" id="P31948"/>
<dbReference type="Reactome" id="R-HSA-3371497">
    <property type="pathway name" value="HSP90 chaperone cycle for steroid hormone receptors (SHR) in the presence of ligand"/>
</dbReference>
<dbReference type="Reactome" id="R-HSA-9696273">
    <property type="pathway name" value="RND1 GTPase cycle"/>
</dbReference>
<dbReference type="SignaLink" id="P31948"/>
<dbReference type="SIGNOR" id="P31948"/>
<dbReference type="BioGRID-ORCS" id="10963">
    <property type="hits" value="106 hits in 1166 CRISPR screens"/>
</dbReference>
<dbReference type="CD-CODE" id="91857CE7">
    <property type="entry name" value="Nucleolus"/>
</dbReference>
<dbReference type="CD-CODE" id="DEE660B4">
    <property type="entry name" value="Stress granule"/>
</dbReference>
<dbReference type="CD-CODE" id="FB4E32DD">
    <property type="entry name" value="Presynaptic clusters and postsynaptic densities"/>
</dbReference>
<dbReference type="ChiTaRS" id="STIP1">
    <property type="organism name" value="human"/>
</dbReference>
<dbReference type="EvolutionaryTrace" id="P31948"/>
<dbReference type="GeneWiki" id="Hop_(protein)"/>
<dbReference type="GenomeRNAi" id="10963"/>
<dbReference type="Pharos" id="P31948">
    <property type="development level" value="Tbio"/>
</dbReference>
<dbReference type="PRO" id="PR:P31948"/>
<dbReference type="Proteomes" id="UP000005640">
    <property type="component" value="Chromosome 11"/>
</dbReference>
<dbReference type="RNAct" id="P31948">
    <property type="molecule type" value="protein"/>
</dbReference>
<dbReference type="Bgee" id="ENSG00000168439">
    <property type="expression patterns" value="Expressed in adrenal tissue and 203 other cell types or tissues"/>
</dbReference>
<dbReference type="ExpressionAtlas" id="P31948">
    <property type="expression patterns" value="baseline and differential"/>
</dbReference>
<dbReference type="GO" id="GO:0005829">
    <property type="term" value="C:cytosol"/>
    <property type="evidence" value="ECO:0000304"/>
    <property type="project" value="Reactome"/>
</dbReference>
<dbReference type="GO" id="GO:0120293">
    <property type="term" value="C:dynein axonemal particle"/>
    <property type="evidence" value="ECO:0000250"/>
    <property type="project" value="UniProtKB"/>
</dbReference>
<dbReference type="GO" id="GO:0005794">
    <property type="term" value="C:Golgi apparatus"/>
    <property type="evidence" value="ECO:0000304"/>
    <property type="project" value="ProtInc"/>
</dbReference>
<dbReference type="GO" id="GO:0005634">
    <property type="term" value="C:nucleus"/>
    <property type="evidence" value="ECO:0000304"/>
    <property type="project" value="UniProtKB"/>
</dbReference>
<dbReference type="GO" id="GO:0101031">
    <property type="term" value="C:protein folding chaperone complex"/>
    <property type="evidence" value="ECO:0000314"/>
    <property type="project" value="UniProtKB"/>
</dbReference>
<dbReference type="GO" id="GO:0032991">
    <property type="term" value="C:protein-containing complex"/>
    <property type="evidence" value="ECO:0000314"/>
    <property type="project" value="UniProtKB"/>
</dbReference>
<dbReference type="GO" id="GO:0051879">
    <property type="term" value="F:Hsp90 protein binding"/>
    <property type="evidence" value="ECO:0000353"/>
    <property type="project" value="UniProtKB"/>
</dbReference>
<dbReference type="GO" id="GO:0003723">
    <property type="term" value="F:RNA binding"/>
    <property type="evidence" value="ECO:0007005"/>
    <property type="project" value="UniProtKB"/>
</dbReference>
<dbReference type="GO" id="GO:0098761">
    <property type="term" value="P:cellular response to interleukin-7"/>
    <property type="evidence" value="ECO:0007669"/>
    <property type="project" value="Ensembl"/>
</dbReference>
<dbReference type="FunFam" id="1.10.260.100:FF:000004">
    <property type="entry name" value="Putative stress-induced-phosphoprotein 1"/>
    <property type="match status" value="1"/>
</dbReference>
<dbReference type="FunFam" id="1.25.40.10:FF:000010">
    <property type="entry name" value="Stress-induced phosphoprotein 1"/>
    <property type="match status" value="1"/>
</dbReference>
<dbReference type="FunFam" id="1.25.40.10:FF:000020">
    <property type="entry name" value="Stress-induced phosphoprotein 1"/>
    <property type="match status" value="1"/>
</dbReference>
<dbReference type="FunFam" id="1.10.260.100:FF:000002">
    <property type="entry name" value="Stress-induced-phosphoprotein 1 (Hsp70/Hsp90-organizing)"/>
    <property type="match status" value="1"/>
</dbReference>
<dbReference type="FunFam" id="1.25.40.10:FF:000027">
    <property type="entry name" value="stress-induced-phosphoprotein 1 isoform X1"/>
    <property type="match status" value="1"/>
</dbReference>
<dbReference type="Gene3D" id="1.10.260.100">
    <property type="match status" value="2"/>
</dbReference>
<dbReference type="Gene3D" id="1.25.40.10">
    <property type="entry name" value="Tetratricopeptide repeat domain"/>
    <property type="match status" value="3"/>
</dbReference>
<dbReference type="IDEAL" id="IID00449"/>
<dbReference type="InterPro" id="IPR041243">
    <property type="entry name" value="STI1/HOP_DP"/>
</dbReference>
<dbReference type="InterPro" id="IPR006636">
    <property type="entry name" value="STI1_HS-bd"/>
</dbReference>
<dbReference type="InterPro" id="IPR011990">
    <property type="entry name" value="TPR-like_helical_dom_sf"/>
</dbReference>
<dbReference type="InterPro" id="IPR013105">
    <property type="entry name" value="TPR_2"/>
</dbReference>
<dbReference type="InterPro" id="IPR019734">
    <property type="entry name" value="TPR_rpt"/>
</dbReference>
<dbReference type="PANTHER" id="PTHR22904:SF523">
    <property type="entry name" value="STRESS-INDUCED-PHOSPHOPROTEIN 1"/>
    <property type="match status" value="1"/>
</dbReference>
<dbReference type="PANTHER" id="PTHR22904">
    <property type="entry name" value="TPR REPEAT CONTAINING PROTEIN"/>
    <property type="match status" value="1"/>
</dbReference>
<dbReference type="Pfam" id="PF17830">
    <property type="entry name" value="STI1-HOP_DP"/>
    <property type="match status" value="2"/>
</dbReference>
<dbReference type="Pfam" id="PF13414">
    <property type="entry name" value="TPR_11"/>
    <property type="match status" value="2"/>
</dbReference>
<dbReference type="Pfam" id="PF13424">
    <property type="entry name" value="TPR_12"/>
    <property type="match status" value="1"/>
</dbReference>
<dbReference type="Pfam" id="PF07719">
    <property type="entry name" value="TPR_2"/>
    <property type="match status" value="1"/>
</dbReference>
<dbReference type="Pfam" id="PF13181">
    <property type="entry name" value="TPR_8"/>
    <property type="match status" value="1"/>
</dbReference>
<dbReference type="SMART" id="SM00727">
    <property type="entry name" value="STI1"/>
    <property type="match status" value="2"/>
</dbReference>
<dbReference type="SMART" id="SM00028">
    <property type="entry name" value="TPR"/>
    <property type="match status" value="9"/>
</dbReference>
<dbReference type="SUPFAM" id="SSF48452">
    <property type="entry name" value="TPR-like"/>
    <property type="match status" value="3"/>
</dbReference>
<dbReference type="PROSITE" id="PS50005">
    <property type="entry name" value="TPR"/>
    <property type="match status" value="9"/>
</dbReference>
<dbReference type="PROSITE" id="PS50293">
    <property type="entry name" value="TPR_REGION"/>
    <property type="match status" value="2"/>
</dbReference>
<organism>
    <name type="scientific">Homo sapiens</name>
    <name type="common">Human</name>
    <dbReference type="NCBI Taxonomy" id="9606"/>
    <lineage>
        <taxon>Eukaryota</taxon>
        <taxon>Metazoa</taxon>
        <taxon>Chordata</taxon>
        <taxon>Craniata</taxon>
        <taxon>Vertebrata</taxon>
        <taxon>Euteleostomi</taxon>
        <taxon>Mammalia</taxon>
        <taxon>Eutheria</taxon>
        <taxon>Euarchontoglires</taxon>
        <taxon>Primates</taxon>
        <taxon>Haplorrhini</taxon>
        <taxon>Catarrhini</taxon>
        <taxon>Hominidae</taxon>
        <taxon>Homo</taxon>
    </lineage>
</organism>
<accession>P31948</accession>
<accession>B4DM70</accession>
<accession>F5H0T1</accession>
<accession>G3XAD8</accession>
<accession>Q3ZCU9</accession>
<accession>Q5TZU9</accession>
<name>STIP1_HUMAN</name>